<gene>
    <name evidence="1" type="primary">rsmA</name>
    <name evidence="1" type="synonym">ksgA</name>
    <name type="ordered locus">swp_4087</name>
</gene>
<proteinExistence type="inferred from homology"/>
<comment type="function">
    <text evidence="1">Specifically dimethylates two adjacent adenosines (A1518 and A1519) in the loop of a conserved hairpin near the 3'-end of 16S rRNA in the 30S particle. May play a critical role in biogenesis of 30S subunits.</text>
</comment>
<comment type="catalytic activity">
    <reaction evidence="1">
        <text>adenosine(1518)/adenosine(1519) in 16S rRNA + 4 S-adenosyl-L-methionine = N(6)-dimethyladenosine(1518)/N(6)-dimethyladenosine(1519) in 16S rRNA + 4 S-adenosyl-L-homocysteine + 4 H(+)</text>
        <dbReference type="Rhea" id="RHEA:19609"/>
        <dbReference type="Rhea" id="RHEA-COMP:10232"/>
        <dbReference type="Rhea" id="RHEA-COMP:10233"/>
        <dbReference type="ChEBI" id="CHEBI:15378"/>
        <dbReference type="ChEBI" id="CHEBI:57856"/>
        <dbReference type="ChEBI" id="CHEBI:59789"/>
        <dbReference type="ChEBI" id="CHEBI:74411"/>
        <dbReference type="ChEBI" id="CHEBI:74493"/>
        <dbReference type="EC" id="2.1.1.182"/>
    </reaction>
</comment>
<comment type="subcellular location">
    <subcellularLocation>
        <location evidence="1">Cytoplasm</location>
    </subcellularLocation>
</comment>
<comment type="similarity">
    <text evidence="1">Belongs to the class I-like SAM-binding methyltransferase superfamily. rRNA adenine N(6)-methyltransferase family. RsmA subfamily.</text>
</comment>
<reference key="1">
    <citation type="journal article" date="2008" name="PLoS ONE">
        <title>Environmental adaptation: genomic analysis of the piezotolerant and psychrotolerant deep-sea iron reducing bacterium Shewanella piezotolerans WP3.</title>
        <authorList>
            <person name="Wang F."/>
            <person name="Wang J."/>
            <person name="Jian H."/>
            <person name="Zhang B."/>
            <person name="Li S."/>
            <person name="Wang F."/>
            <person name="Zeng X."/>
            <person name="Gao L."/>
            <person name="Bartlett D.H."/>
            <person name="Yu J."/>
            <person name="Hu S."/>
            <person name="Xiao X."/>
        </authorList>
    </citation>
    <scope>NUCLEOTIDE SEQUENCE [LARGE SCALE GENOMIC DNA]</scope>
    <source>
        <strain>WP3 / JCM 13877</strain>
    </source>
</reference>
<organism>
    <name type="scientific">Shewanella piezotolerans (strain WP3 / JCM 13877)</name>
    <dbReference type="NCBI Taxonomy" id="225849"/>
    <lineage>
        <taxon>Bacteria</taxon>
        <taxon>Pseudomonadati</taxon>
        <taxon>Pseudomonadota</taxon>
        <taxon>Gammaproteobacteria</taxon>
        <taxon>Alteromonadales</taxon>
        <taxon>Shewanellaceae</taxon>
        <taxon>Shewanella</taxon>
    </lineage>
</organism>
<sequence>MSNKVHLGHTARKRFGQNFLTDENVINRIVGAISPDNEHVMVEIGPGLAALTEPVASGIDKLTVVELDKDLVERLKTHPTLKDKLEIHQGDALNFDFKQLVREDMQMKVFGNLPYNISTPLMFHLFEFAQYIENMHFMLQKEVVLRLSASPGTKAYGRLTVMAQYHCQVMPVLEVPPGCFTPPPKVDSAVVRLVPYKTKPFPCKDVEVLRHLTTTAFNMRRKTLRNNLKHMLSDDEFAQLEIDSTLRPEQISVQQYVAMANLFIDKQTKS</sequence>
<evidence type="ECO:0000255" key="1">
    <source>
        <dbReference type="HAMAP-Rule" id="MF_00607"/>
    </source>
</evidence>
<name>RSMA_SHEPW</name>
<accession>B8CSX5</accession>
<keyword id="KW-0963">Cytoplasm</keyword>
<keyword id="KW-0489">Methyltransferase</keyword>
<keyword id="KW-0694">RNA-binding</keyword>
<keyword id="KW-0698">rRNA processing</keyword>
<keyword id="KW-0949">S-adenosyl-L-methionine</keyword>
<keyword id="KW-0808">Transferase</keyword>
<protein>
    <recommendedName>
        <fullName evidence="1">Ribosomal RNA small subunit methyltransferase A</fullName>
        <ecNumber evidence="1">2.1.1.182</ecNumber>
    </recommendedName>
    <alternativeName>
        <fullName evidence="1">16S rRNA (adenine(1518)-N(6)/adenine(1519)-N(6))-dimethyltransferase</fullName>
    </alternativeName>
    <alternativeName>
        <fullName evidence="1">16S rRNA dimethyladenosine transferase</fullName>
    </alternativeName>
    <alternativeName>
        <fullName evidence="1">16S rRNA dimethylase</fullName>
    </alternativeName>
    <alternativeName>
        <fullName evidence="1">S-adenosylmethionine-6-N', N'-adenosyl(rRNA) dimethyltransferase</fullName>
    </alternativeName>
</protein>
<feature type="chain" id="PRO_1000130321" description="Ribosomal RNA small subunit methyltransferase A">
    <location>
        <begin position="1"/>
        <end position="270"/>
    </location>
</feature>
<feature type="binding site" evidence="1">
    <location>
        <position position="18"/>
    </location>
    <ligand>
        <name>S-adenosyl-L-methionine</name>
        <dbReference type="ChEBI" id="CHEBI:59789"/>
    </ligand>
</feature>
<feature type="binding site" evidence="1">
    <location>
        <position position="20"/>
    </location>
    <ligand>
        <name>S-adenosyl-L-methionine</name>
        <dbReference type="ChEBI" id="CHEBI:59789"/>
    </ligand>
</feature>
<feature type="binding site" evidence="1">
    <location>
        <position position="45"/>
    </location>
    <ligand>
        <name>S-adenosyl-L-methionine</name>
        <dbReference type="ChEBI" id="CHEBI:59789"/>
    </ligand>
</feature>
<feature type="binding site" evidence="1">
    <location>
        <position position="66"/>
    </location>
    <ligand>
        <name>S-adenosyl-L-methionine</name>
        <dbReference type="ChEBI" id="CHEBI:59789"/>
    </ligand>
</feature>
<feature type="binding site" evidence="1">
    <location>
        <position position="91"/>
    </location>
    <ligand>
        <name>S-adenosyl-L-methionine</name>
        <dbReference type="ChEBI" id="CHEBI:59789"/>
    </ligand>
</feature>
<feature type="binding site" evidence="1">
    <location>
        <position position="112"/>
    </location>
    <ligand>
        <name>S-adenosyl-L-methionine</name>
        <dbReference type="ChEBI" id="CHEBI:59789"/>
    </ligand>
</feature>
<dbReference type="EC" id="2.1.1.182" evidence="1"/>
<dbReference type="EMBL" id="CP000472">
    <property type="protein sequence ID" value="ACJ30751.1"/>
    <property type="molecule type" value="Genomic_DNA"/>
</dbReference>
<dbReference type="RefSeq" id="WP_020914092.1">
    <property type="nucleotide sequence ID" value="NC_011566.1"/>
</dbReference>
<dbReference type="SMR" id="B8CSX5"/>
<dbReference type="STRING" id="225849.swp_4087"/>
<dbReference type="KEGG" id="swp:swp_4087"/>
<dbReference type="eggNOG" id="COG0030">
    <property type="taxonomic scope" value="Bacteria"/>
</dbReference>
<dbReference type="HOGENOM" id="CLU_041220_0_1_6"/>
<dbReference type="OrthoDB" id="9814755at2"/>
<dbReference type="Proteomes" id="UP000000753">
    <property type="component" value="Chromosome"/>
</dbReference>
<dbReference type="GO" id="GO:0005829">
    <property type="term" value="C:cytosol"/>
    <property type="evidence" value="ECO:0007669"/>
    <property type="project" value="TreeGrafter"/>
</dbReference>
<dbReference type="GO" id="GO:0052908">
    <property type="term" value="F:16S rRNA (adenine(1518)-N(6)/adenine(1519)-N(6))-dimethyltransferase activity"/>
    <property type="evidence" value="ECO:0007669"/>
    <property type="project" value="UniProtKB-EC"/>
</dbReference>
<dbReference type="GO" id="GO:0003723">
    <property type="term" value="F:RNA binding"/>
    <property type="evidence" value="ECO:0007669"/>
    <property type="project" value="UniProtKB-KW"/>
</dbReference>
<dbReference type="FunFam" id="1.10.8.100:FF:000001">
    <property type="entry name" value="Ribosomal RNA small subunit methyltransferase A"/>
    <property type="match status" value="1"/>
</dbReference>
<dbReference type="FunFam" id="3.40.50.150:FF:000006">
    <property type="entry name" value="Ribosomal RNA small subunit methyltransferase A"/>
    <property type="match status" value="1"/>
</dbReference>
<dbReference type="Gene3D" id="1.10.8.100">
    <property type="entry name" value="Ribosomal RNA adenine dimethylase-like, domain 2"/>
    <property type="match status" value="1"/>
</dbReference>
<dbReference type="Gene3D" id="3.40.50.150">
    <property type="entry name" value="Vaccinia Virus protein VP39"/>
    <property type="match status" value="1"/>
</dbReference>
<dbReference type="HAMAP" id="MF_00607">
    <property type="entry name" value="16SrRNA_methyltr_A"/>
    <property type="match status" value="1"/>
</dbReference>
<dbReference type="InterPro" id="IPR001737">
    <property type="entry name" value="KsgA/Erm"/>
</dbReference>
<dbReference type="InterPro" id="IPR023165">
    <property type="entry name" value="rRNA_Ade_diMease-like_C"/>
</dbReference>
<dbReference type="InterPro" id="IPR020596">
    <property type="entry name" value="rRNA_Ade_Mease_Trfase_CS"/>
</dbReference>
<dbReference type="InterPro" id="IPR020598">
    <property type="entry name" value="rRNA_Ade_methylase_Trfase_N"/>
</dbReference>
<dbReference type="InterPro" id="IPR011530">
    <property type="entry name" value="rRNA_adenine_dimethylase"/>
</dbReference>
<dbReference type="InterPro" id="IPR029063">
    <property type="entry name" value="SAM-dependent_MTases_sf"/>
</dbReference>
<dbReference type="NCBIfam" id="TIGR00755">
    <property type="entry name" value="ksgA"/>
    <property type="match status" value="1"/>
</dbReference>
<dbReference type="PANTHER" id="PTHR11727">
    <property type="entry name" value="DIMETHYLADENOSINE TRANSFERASE"/>
    <property type="match status" value="1"/>
</dbReference>
<dbReference type="PANTHER" id="PTHR11727:SF7">
    <property type="entry name" value="DIMETHYLADENOSINE TRANSFERASE-RELATED"/>
    <property type="match status" value="1"/>
</dbReference>
<dbReference type="Pfam" id="PF00398">
    <property type="entry name" value="RrnaAD"/>
    <property type="match status" value="1"/>
</dbReference>
<dbReference type="SMART" id="SM00650">
    <property type="entry name" value="rADc"/>
    <property type="match status" value="1"/>
</dbReference>
<dbReference type="SUPFAM" id="SSF53335">
    <property type="entry name" value="S-adenosyl-L-methionine-dependent methyltransferases"/>
    <property type="match status" value="1"/>
</dbReference>
<dbReference type="PROSITE" id="PS01131">
    <property type="entry name" value="RRNA_A_DIMETH"/>
    <property type="match status" value="1"/>
</dbReference>
<dbReference type="PROSITE" id="PS51689">
    <property type="entry name" value="SAM_RNA_A_N6_MT"/>
    <property type="match status" value="1"/>
</dbReference>